<protein>
    <recommendedName>
        <fullName>Anoctamin-10</fullName>
    </recommendedName>
    <alternativeName>
        <fullName>Transmembrane protein 16K</fullName>
    </alternativeName>
</protein>
<keyword id="KW-0002">3D-structure</keyword>
<keyword id="KW-0025">Alternative splicing</keyword>
<keyword id="KW-1003">Cell membrane</keyword>
<keyword id="KW-0225">Disease variant</keyword>
<keyword id="KW-0472">Membrane</keyword>
<keyword id="KW-0523">Neurodegeneration</keyword>
<keyword id="KW-1267">Proteomics identification</keyword>
<keyword id="KW-1185">Reference proteome</keyword>
<keyword id="KW-0812">Transmembrane</keyword>
<keyword id="KW-1133">Transmembrane helix</keyword>
<evidence type="ECO:0000255" key="1"/>
<evidence type="ECO:0000269" key="2">
    <source>
    </source>
</evidence>
<evidence type="ECO:0000269" key="3">
    <source>
    </source>
</evidence>
<evidence type="ECO:0000269" key="4">
    <source>
    </source>
</evidence>
<evidence type="ECO:0000269" key="5">
    <source>
    </source>
</evidence>
<evidence type="ECO:0000269" key="6">
    <source>
    </source>
</evidence>
<evidence type="ECO:0000269" key="7">
    <source>
    </source>
</evidence>
<evidence type="ECO:0000303" key="8">
    <source>
    </source>
</evidence>
<evidence type="ECO:0000303" key="9">
    <source>
    </source>
</evidence>
<evidence type="ECO:0000305" key="10"/>
<evidence type="ECO:0007829" key="11">
    <source>
        <dbReference type="PDB" id="5OC9"/>
    </source>
</evidence>
<evidence type="ECO:0007829" key="12">
    <source>
        <dbReference type="PDB" id="6R7X"/>
    </source>
</evidence>
<organism>
    <name type="scientific">Homo sapiens</name>
    <name type="common">Human</name>
    <dbReference type="NCBI Taxonomy" id="9606"/>
    <lineage>
        <taxon>Eukaryota</taxon>
        <taxon>Metazoa</taxon>
        <taxon>Chordata</taxon>
        <taxon>Craniata</taxon>
        <taxon>Vertebrata</taxon>
        <taxon>Euteleostomi</taxon>
        <taxon>Mammalia</taxon>
        <taxon>Eutheria</taxon>
        <taxon>Euarchontoglires</taxon>
        <taxon>Primates</taxon>
        <taxon>Haplorrhini</taxon>
        <taxon>Catarrhini</taxon>
        <taxon>Hominidae</taxon>
        <taxon>Homo</taxon>
    </lineage>
</organism>
<proteinExistence type="evidence at protein level"/>
<sequence length="660" mass="76329">MKVTLSALDTSESSFTPLVVIELAQDVKEETKEWLKNRIIAKKKDGGAQLLFRPLLNKYEQETLENQNLYLVGASKIRMLLGAEAVGLVKECNDNTMRAFTYRTRQNFKGFDDNNDDFLTMAECQFIIKHELENLRAKDEKMIPGYPQAKLYPGKSLLRRLLTSGIVIQVFPLHDSEALKKLEDTWYTRFALKYQPIDSIRGYFGETIALYFGFLEYFTFALIPMAVIGLPYYLFVWEDYDKYVIFASFNLIWSTVILELWKRGCANMTYRWGTLLMKRKFEEPRPGFHGVLGINSITGKEEPLYPSYKRQLRIYLVSLPFVCLCLYFSLYVMMIYFDMEVWALGLHENSGSEWTSVLLYVPSIIYAIVIEIMNRLYRYAAEFLTSWENHRLESAYQNHLILKVLVFNFLNCFASLFYIAFVLKDMKLLRQSLATLLITSQILNQIMESFLPYWLQRKHGVRVKRKVQALKADIDATLYEQVILEKEMGTYLGTFDDYLELFLQFGYVSLFSCVYPLAAAFAVLNNFTEVNSDALKMCRVFKRPFSEPSANIGVWQLAFETMSVISVVTNCALIGMSPQVNAVFPESKADLILIVVAVEHALLALKFILAFAIPDKPRHIQMKLARLEFESLEALKQQQMKLVTENLKEEPMESGKEKAT</sequence>
<name>ANO10_HUMAN</name>
<feature type="chain" id="PRO_0000289957" description="Anoctamin-10">
    <location>
        <begin position="1"/>
        <end position="660"/>
    </location>
</feature>
<feature type="topological domain" description="Cytoplasmic" evidence="1">
    <location>
        <begin position="1"/>
        <end position="207"/>
    </location>
</feature>
<feature type="transmembrane region" description="Helical" evidence="1">
    <location>
        <begin position="208"/>
        <end position="228"/>
    </location>
</feature>
<feature type="topological domain" description="Extracellular" evidence="1">
    <location>
        <begin position="229"/>
        <end position="240"/>
    </location>
</feature>
<feature type="transmembrane region" description="Helical" evidence="1">
    <location>
        <begin position="241"/>
        <end position="261"/>
    </location>
</feature>
<feature type="topological domain" description="Cytoplasmic" evidence="1">
    <location>
        <begin position="262"/>
        <end position="316"/>
    </location>
</feature>
<feature type="transmembrane region" description="Helical" evidence="1">
    <location>
        <begin position="317"/>
        <end position="337"/>
    </location>
</feature>
<feature type="topological domain" description="Extracellular" evidence="1">
    <location>
        <begin position="338"/>
        <end position="352"/>
    </location>
</feature>
<feature type="transmembrane region" description="Helical" evidence="1">
    <location>
        <begin position="353"/>
        <end position="373"/>
    </location>
</feature>
<feature type="topological domain" description="Cytoplasmic" evidence="1">
    <location>
        <begin position="374"/>
        <end position="400"/>
    </location>
</feature>
<feature type="transmembrane region" description="Helical" evidence="1">
    <location>
        <begin position="401"/>
        <end position="421"/>
    </location>
</feature>
<feature type="topological domain" description="Extracellular" evidence="1">
    <location>
        <begin position="422"/>
        <end position="500"/>
    </location>
</feature>
<feature type="transmembrane region" description="Helical" evidence="1">
    <location>
        <begin position="501"/>
        <end position="521"/>
    </location>
</feature>
<feature type="topological domain" description="Cytoplasmic" evidence="1">
    <location>
        <begin position="522"/>
        <end position="553"/>
    </location>
</feature>
<feature type="transmembrane region" description="Helical" evidence="1">
    <location>
        <begin position="554"/>
        <end position="574"/>
    </location>
</feature>
<feature type="topological domain" description="Extracellular" evidence="1">
    <location>
        <begin position="575"/>
        <end position="590"/>
    </location>
</feature>
<feature type="transmembrane region" description="Helical" evidence="1">
    <location>
        <begin position="591"/>
        <end position="611"/>
    </location>
</feature>
<feature type="topological domain" description="Cytoplasmic" evidence="1">
    <location>
        <begin position="612"/>
        <end position="660"/>
    </location>
</feature>
<feature type="splice variant" id="VSP_038211" description="In isoform 4." evidence="8">
    <original>GAQLLFRPLLNKYEQETLENQNLYLVGASKIRMLLGAEAVGLVKECNDNTMRAFTYRTRQNFKGFDDNNDDFLTMAECQFIIKHELENLRAKDEKMIPGYPQAKLYPGKSLL</original>
    <variation>V</variation>
    <location>
        <begin position="47"/>
        <end position="158"/>
    </location>
</feature>
<feature type="splice variant" id="VSP_038212" description="In isoform 3." evidence="8">
    <location>
        <begin position="47"/>
        <end position="112"/>
    </location>
</feature>
<feature type="splice variant" id="VSP_026033" description="In isoform 2." evidence="9">
    <location>
        <begin position="198"/>
        <end position="387"/>
    </location>
</feature>
<feature type="splice variant" id="VSP_045885" description="In isoform 5." evidence="8">
    <original>HALLALKFILAFAIPDKPRHIQMKLARLEFESLEALKQQQMKLVTENLKEEPMESGKEKAT</original>
    <variation>AASCKLVSLPRYSWSTNSVPGTVIGPGV</variation>
    <location>
        <begin position="600"/>
        <end position="660"/>
    </location>
</feature>
<feature type="sequence variant" id="VAR_032638" description="In dbSNP:rs3772165." evidence="2">
    <original>R</original>
    <variation>Q</variation>
    <location>
        <position position="462"/>
    </location>
</feature>
<feature type="sequence variant" id="VAR_064888" description="In SCAR10; dbSNP:rs387907089." evidence="5">
    <original>L</original>
    <variation>R</variation>
    <location>
        <position position="510"/>
    </location>
</feature>
<feature type="sequence variant" id="VAR_032639" description="In dbSNP:rs17409162." evidence="3">
    <original>T</original>
    <variation>M</variation>
    <location>
        <position position="561"/>
    </location>
</feature>
<feature type="sequence variant" id="VAR_032640" description="In dbSNP:rs17853862." evidence="3">
    <original>V</original>
    <variation>A</variation>
    <location>
        <position position="583"/>
    </location>
</feature>
<feature type="strand" evidence="11">
    <location>
        <begin position="19"/>
        <end position="23"/>
    </location>
</feature>
<feature type="helix" evidence="11">
    <location>
        <begin position="29"/>
        <end position="40"/>
    </location>
</feature>
<feature type="helix" evidence="11">
    <location>
        <begin position="43"/>
        <end position="45"/>
    </location>
</feature>
<feature type="strand" evidence="11">
    <location>
        <begin position="51"/>
        <end position="54"/>
    </location>
</feature>
<feature type="helix" evidence="11">
    <location>
        <begin position="60"/>
        <end position="62"/>
    </location>
</feature>
<feature type="helix" evidence="12">
    <location>
        <begin position="63"/>
        <end position="66"/>
    </location>
</feature>
<feature type="strand" evidence="11">
    <location>
        <begin position="69"/>
        <end position="73"/>
    </location>
</feature>
<feature type="helix" evidence="11">
    <location>
        <begin position="76"/>
        <end position="86"/>
    </location>
</feature>
<feature type="strand" evidence="11">
    <location>
        <begin position="89"/>
        <end position="92"/>
    </location>
</feature>
<feature type="strand" evidence="11">
    <location>
        <begin position="97"/>
        <end position="99"/>
    </location>
</feature>
<feature type="helix" evidence="11">
    <location>
        <begin position="105"/>
        <end position="107"/>
    </location>
</feature>
<feature type="helix" evidence="11">
    <location>
        <begin position="121"/>
        <end position="133"/>
    </location>
</feature>
<feature type="strand" evidence="12">
    <location>
        <begin position="136"/>
        <end position="139"/>
    </location>
</feature>
<feature type="strand" evidence="11">
    <location>
        <begin position="141"/>
        <end position="143"/>
    </location>
</feature>
<feature type="strand" evidence="11">
    <location>
        <begin position="146"/>
        <end position="150"/>
    </location>
</feature>
<feature type="helix" evidence="11">
    <location>
        <begin position="157"/>
        <end position="163"/>
    </location>
</feature>
<feature type="strand" evidence="11">
    <location>
        <begin position="166"/>
        <end position="172"/>
    </location>
</feature>
<feature type="helix" evidence="11">
    <location>
        <begin position="176"/>
        <end position="186"/>
    </location>
</feature>
<feature type="helix" evidence="11">
    <location>
        <begin position="197"/>
        <end position="204"/>
    </location>
</feature>
<feature type="helix" evidence="11">
    <location>
        <begin position="206"/>
        <end position="234"/>
    </location>
</feature>
<feature type="turn" evidence="12">
    <location>
        <begin position="235"/>
        <end position="237"/>
    </location>
</feature>
<feature type="helix" evidence="11">
    <location>
        <begin position="240"/>
        <end position="272"/>
    </location>
</feature>
<feature type="turn" evidence="12">
    <location>
        <begin position="274"/>
        <end position="276"/>
    </location>
</feature>
<feature type="helix" evidence="11">
    <location>
        <begin position="279"/>
        <end position="281"/>
    </location>
</feature>
<feature type="strand" evidence="11">
    <location>
        <begin position="291"/>
        <end position="294"/>
    </location>
</feature>
<feature type="strand" evidence="11">
    <location>
        <begin position="296"/>
        <end position="298"/>
    </location>
</feature>
<feature type="strand" evidence="11">
    <location>
        <begin position="301"/>
        <end position="304"/>
    </location>
</feature>
<feature type="helix" evidence="11">
    <location>
        <begin position="307"/>
        <end position="316"/>
    </location>
</feature>
<feature type="helix" evidence="11">
    <location>
        <begin position="318"/>
        <end position="348"/>
    </location>
</feature>
<feature type="strand" evidence="12">
    <location>
        <begin position="352"/>
        <end position="354"/>
    </location>
</feature>
<feature type="helix" evidence="11">
    <location>
        <begin position="355"/>
        <end position="358"/>
    </location>
</feature>
<feature type="helix" evidence="11">
    <location>
        <begin position="361"/>
        <end position="387"/>
    </location>
</feature>
<feature type="helix" evidence="11">
    <location>
        <begin position="393"/>
        <end position="421"/>
    </location>
</feature>
<feature type="helix" evidence="11">
    <location>
        <begin position="426"/>
        <end position="437"/>
    </location>
</feature>
<feature type="helix" evidence="11">
    <location>
        <begin position="439"/>
        <end position="448"/>
    </location>
</feature>
<feature type="helix" evidence="11">
    <location>
        <begin position="450"/>
        <end position="468"/>
    </location>
</feature>
<feature type="helix" evidence="11">
    <location>
        <begin position="477"/>
        <end position="487"/>
    </location>
</feature>
<feature type="helix" evidence="11">
    <location>
        <begin position="495"/>
        <end position="511"/>
    </location>
</feature>
<feature type="turn" evidence="11">
    <location>
        <begin position="512"/>
        <end position="514"/>
    </location>
</feature>
<feature type="helix" evidence="11">
    <location>
        <begin position="518"/>
        <end position="539"/>
    </location>
</feature>
<feature type="helix" evidence="11">
    <location>
        <begin position="555"/>
        <end position="576"/>
    </location>
</feature>
<feature type="helix" evidence="11">
    <location>
        <begin position="578"/>
        <end position="581"/>
    </location>
</feature>
<feature type="strand" evidence="12">
    <location>
        <begin position="584"/>
        <end position="586"/>
    </location>
</feature>
<feature type="helix" evidence="11">
    <location>
        <begin position="588"/>
        <end position="612"/>
    </location>
</feature>
<feature type="helix" evidence="11">
    <location>
        <begin position="618"/>
        <end position="638"/>
    </location>
</feature>
<feature type="sequence conflict" description="In Ref. 1; BAG60264." evidence="10" ref="1">
    <original>S</original>
    <variation>P</variation>
    <location sequence="Q9NW15-5">
        <position position="607"/>
    </location>
</feature>
<dbReference type="EMBL" id="AK001237">
    <property type="protein sequence ID" value="BAA91573.1"/>
    <property type="status" value="ALT_SEQ"/>
    <property type="molecule type" value="mRNA"/>
</dbReference>
<dbReference type="EMBL" id="AK096302">
    <property type="protein sequence ID" value="BAG53253.1"/>
    <property type="molecule type" value="mRNA"/>
</dbReference>
<dbReference type="EMBL" id="AK131223">
    <property type="protein sequence ID" value="BAG54755.1"/>
    <property type="molecule type" value="mRNA"/>
</dbReference>
<dbReference type="EMBL" id="AK292368">
    <property type="protein sequence ID" value="BAF85057.1"/>
    <property type="molecule type" value="mRNA"/>
</dbReference>
<dbReference type="EMBL" id="AK295969">
    <property type="protein sequence ID" value="BAG58745.1"/>
    <property type="molecule type" value="mRNA"/>
</dbReference>
<dbReference type="EMBL" id="AK297949">
    <property type="protein sequence ID" value="BAG60264.1"/>
    <property type="molecule type" value="mRNA"/>
</dbReference>
<dbReference type="EMBL" id="AC097638">
    <property type="status" value="NOT_ANNOTATED_CDS"/>
    <property type="molecule type" value="Genomic_DNA"/>
</dbReference>
<dbReference type="EMBL" id="AC104184">
    <property type="status" value="NOT_ANNOTATED_CDS"/>
    <property type="molecule type" value="Genomic_DNA"/>
</dbReference>
<dbReference type="EMBL" id="AC105903">
    <property type="status" value="NOT_ANNOTATED_CDS"/>
    <property type="molecule type" value="Genomic_DNA"/>
</dbReference>
<dbReference type="EMBL" id="AC135852">
    <property type="status" value="NOT_ANNOTATED_CDS"/>
    <property type="molecule type" value="Genomic_DNA"/>
</dbReference>
<dbReference type="EMBL" id="CH471055">
    <property type="protein sequence ID" value="EAW64696.1"/>
    <property type="molecule type" value="Genomic_DNA"/>
</dbReference>
<dbReference type="EMBL" id="CH471055">
    <property type="protein sequence ID" value="EAW64697.1"/>
    <property type="molecule type" value="Genomic_DNA"/>
</dbReference>
<dbReference type="EMBL" id="BC038855">
    <property type="status" value="NOT_ANNOTATED_CDS"/>
    <property type="molecule type" value="mRNA"/>
</dbReference>
<dbReference type="CCDS" id="CCDS2710.2">
    <molecule id="Q9NW15-1"/>
</dbReference>
<dbReference type="CCDS" id="CCDS56247.1">
    <molecule id="Q9NW15-4"/>
</dbReference>
<dbReference type="CCDS" id="CCDS56248.1">
    <molecule id="Q9NW15-3"/>
</dbReference>
<dbReference type="CCDS" id="CCDS56249.1">
    <molecule id="Q9NW15-2"/>
</dbReference>
<dbReference type="CCDS" id="CCDS56250.1">
    <molecule id="Q9NW15-5"/>
</dbReference>
<dbReference type="RefSeq" id="NP_001191760.1">
    <molecule id="Q9NW15-5"/>
    <property type="nucleotide sequence ID" value="NM_001204831.3"/>
</dbReference>
<dbReference type="RefSeq" id="NP_001191761.1">
    <molecule id="Q9NW15-3"/>
    <property type="nucleotide sequence ID" value="NM_001204832.3"/>
</dbReference>
<dbReference type="RefSeq" id="NP_001191762.1">
    <molecule id="Q9NW15-4"/>
    <property type="nucleotide sequence ID" value="NM_001204833.3"/>
</dbReference>
<dbReference type="RefSeq" id="NP_001191763.1">
    <molecule id="Q9NW15-2"/>
    <property type="nucleotide sequence ID" value="NM_001204834.3"/>
</dbReference>
<dbReference type="RefSeq" id="NP_001333392.1">
    <property type="nucleotide sequence ID" value="NM_001346463.1"/>
</dbReference>
<dbReference type="RefSeq" id="NP_001333393.1">
    <property type="nucleotide sequence ID" value="NM_001346464.1"/>
</dbReference>
<dbReference type="RefSeq" id="NP_001333394.1">
    <property type="nucleotide sequence ID" value="NM_001346465.1"/>
</dbReference>
<dbReference type="RefSeq" id="NP_001333395.1">
    <molecule id="Q9NW15-3"/>
    <property type="nucleotide sequence ID" value="NM_001346466.2"/>
</dbReference>
<dbReference type="RefSeq" id="NP_001333396.1">
    <property type="nucleotide sequence ID" value="NM_001346467.1"/>
</dbReference>
<dbReference type="RefSeq" id="NP_001333397.1">
    <molecule id="Q9NW15-1"/>
    <property type="nucleotide sequence ID" value="NM_001346468.2"/>
</dbReference>
<dbReference type="RefSeq" id="NP_001333398.1">
    <molecule id="Q9NW15-3"/>
    <property type="nucleotide sequence ID" value="NM_001346469.2"/>
</dbReference>
<dbReference type="RefSeq" id="NP_060545.3">
    <molecule id="Q9NW15-1"/>
    <property type="nucleotide sequence ID" value="NM_018075.4"/>
</dbReference>
<dbReference type="RefSeq" id="XP_016862211.1">
    <property type="nucleotide sequence ID" value="XM_017006722.1"/>
</dbReference>
<dbReference type="PDB" id="5OC9">
    <property type="method" value="X-ray"/>
    <property type="resolution" value="3.20 A"/>
    <property type="chains" value="A/B=1-660"/>
</dbReference>
<dbReference type="PDB" id="6R65">
    <property type="method" value="X-ray"/>
    <property type="resolution" value="3.50 A"/>
    <property type="chains" value="A/B=1-660"/>
</dbReference>
<dbReference type="PDB" id="6R7X">
    <property type="method" value="EM"/>
    <property type="resolution" value="3.47 A"/>
    <property type="chains" value="A/B=1-660"/>
</dbReference>
<dbReference type="PDB" id="6R7Y">
    <property type="method" value="EM"/>
    <property type="resolution" value="4.20 A"/>
    <property type="chains" value="A/B=1-660"/>
</dbReference>
<dbReference type="PDB" id="6R7Z">
    <property type="method" value="EM"/>
    <property type="resolution" value="5.14 A"/>
    <property type="chains" value="A/B=1-660"/>
</dbReference>
<dbReference type="PDBsum" id="5OC9"/>
<dbReference type="PDBsum" id="6R65"/>
<dbReference type="PDBsum" id="6R7X"/>
<dbReference type="PDBsum" id="6R7Y"/>
<dbReference type="PDBsum" id="6R7Z"/>
<dbReference type="EMDB" id="EMD-4746"/>
<dbReference type="EMDB" id="EMD-4747"/>
<dbReference type="EMDB" id="EMD-4748"/>
<dbReference type="SMR" id="Q9NW15"/>
<dbReference type="BioGRID" id="120435">
    <property type="interactions" value="43"/>
</dbReference>
<dbReference type="FunCoup" id="Q9NW15">
    <property type="interactions" value="1068"/>
</dbReference>
<dbReference type="IntAct" id="Q9NW15">
    <property type="interactions" value="15"/>
</dbReference>
<dbReference type="MINT" id="Q9NW15"/>
<dbReference type="STRING" id="9606.ENSP00000292246"/>
<dbReference type="TCDB" id="1.A.17.1.26">
    <property type="family name" value="the calcium-dependent chloride channel (ca-clc) family"/>
</dbReference>
<dbReference type="iPTMnet" id="Q9NW15"/>
<dbReference type="PhosphoSitePlus" id="Q9NW15"/>
<dbReference type="SwissPalm" id="Q9NW15"/>
<dbReference type="BioMuta" id="ANO10"/>
<dbReference type="DMDM" id="148887071"/>
<dbReference type="jPOST" id="Q9NW15"/>
<dbReference type="MassIVE" id="Q9NW15"/>
<dbReference type="PaxDb" id="9606-ENSP00000292246"/>
<dbReference type="PeptideAtlas" id="Q9NW15"/>
<dbReference type="ProteomicsDB" id="10245"/>
<dbReference type="ProteomicsDB" id="82887">
    <molecule id="Q9NW15-1"/>
</dbReference>
<dbReference type="ProteomicsDB" id="82888">
    <molecule id="Q9NW15-2"/>
</dbReference>
<dbReference type="ProteomicsDB" id="82889">
    <molecule id="Q9NW15-3"/>
</dbReference>
<dbReference type="ProteomicsDB" id="82890">
    <molecule id="Q9NW15-4"/>
</dbReference>
<dbReference type="Pumba" id="Q9NW15"/>
<dbReference type="Antibodypedia" id="29353">
    <property type="antibodies" value="77 antibodies from 24 providers"/>
</dbReference>
<dbReference type="DNASU" id="55129"/>
<dbReference type="Ensembl" id="ENST00000292246.8">
    <molecule id="Q9NW15-1"/>
    <property type="protein sequence ID" value="ENSP00000292246.3"/>
    <property type="gene ID" value="ENSG00000160746.13"/>
</dbReference>
<dbReference type="Ensembl" id="ENST00000350459.8">
    <molecule id="Q9NW15-2"/>
    <property type="protein sequence ID" value="ENSP00000327767.4"/>
    <property type="gene ID" value="ENSG00000160746.13"/>
</dbReference>
<dbReference type="Ensembl" id="ENST00000396091.7">
    <molecule id="Q9NW15-3"/>
    <property type="protein sequence ID" value="ENSP00000379398.3"/>
    <property type="gene ID" value="ENSG00000160746.13"/>
</dbReference>
<dbReference type="Ensembl" id="ENST00000414522.6">
    <molecule id="Q9NW15-5"/>
    <property type="protein sequence ID" value="ENSP00000396990.2"/>
    <property type="gene ID" value="ENSG00000160746.13"/>
</dbReference>
<dbReference type="Ensembl" id="ENST00000451430.6">
    <molecule id="Q9NW15-4"/>
    <property type="protein sequence ID" value="ENSP00000394119.2"/>
    <property type="gene ID" value="ENSG00000160746.13"/>
</dbReference>
<dbReference type="GeneID" id="55129"/>
<dbReference type="KEGG" id="hsa:55129"/>
<dbReference type="MANE-Select" id="ENST00000292246.8">
    <property type="protein sequence ID" value="ENSP00000292246.3"/>
    <property type="RefSeq nucleotide sequence ID" value="NM_018075.5"/>
    <property type="RefSeq protein sequence ID" value="NP_060545.3"/>
</dbReference>
<dbReference type="UCSC" id="uc003cmv.4">
    <molecule id="Q9NW15-1"/>
    <property type="organism name" value="human"/>
</dbReference>
<dbReference type="AGR" id="HGNC:25519"/>
<dbReference type="CTD" id="55129"/>
<dbReference type="DisGeNET" id="55129"/>
<dbReference type="GeneCards" id="ANO10"/>
<dbReference type="HGNC" id="HGNC:25519">
    <property type="gene designation" value="ANO10"/>
</dbReference>
<dbReference type="HPA" id="ENSG00000160746">
    <property type="expression patterns" value="Low tissue specificity"/>
</dbReference>
<dbReference type="MalaCards" id="ANO10"/>
<dbReference type="MIM" id="613726">
    <property type="type" value="gene"/>
</dbReference>
<dbReference type="MIM" id="613728">
    <property type="type" value="phenotype"/>
</dbReference>
<dbReference type="neXtProt" id="NX_Q9NW15"/>
<dbReference type="OpenTargets" id="ENSG00000160746"/>
<dbReference type="Orphanet" id="284289">
    <property type="disease" value="Adult-onset autosomal recessive cerebellar ataxia"/>
</dbReference>
<dbReference type="PharmGKB" id="PA164715433"/>
<dbReference type="VEuPathDB" id="HostDB:ENSG00000160746"/>
<dbReference type="eggNOG" id="KOG2513">
    <property type="taxonomic scope" value="Eukaryota"/>
</dbReference>
<dbReference type="GeneTree" id="ENSGT00940000157537"/>
<dbReference type="HOGENOM" id="CLU_615312_0_0_1"/>
<dbReference type="InParanoid" id="Q9NW15"/>
<dbReference type="OMA" id="YENHRTA"/>
<dbReference type="OrthoDB" id="296386at2759"/>
<dbReference type="PAN-GO" id="Q9NW15">
    <property type="GO annotations" value="2 GO annotations based on evolutionary models"/>
</dbReference>
<dbReference type="PhylomeDB" id="Q9NW15"/>
<dbReference type="TreeFam" id="TF314265"/>
<dbReference type="PathwayCommons" id="Q9NW15"/>
<dbReference type="Reactome" id="R-HSA-2672351">
    <property type="pathway name" value="Stimuli-sensing channels"/>
</dbReference>
<dbReference type="Reactome" id="R-HSA-9733458">
    <property type="pathway name" value="Induction of Cell-Cell Fusion"/>
</dbReference>
<dbReference type="SignaLink" id="Q9NW15"/>
<dbReference type="BioGRID-ORCS" id="55129">
    <property type="hits" value="13 hits in 1162 CRISPR screens"/>
</dbReference>
<dbReference type="ChiTaRS" id="ANO10">
    <property type="organism name" value="human"/>
</dbReference>
<dbReference type="GenomeRNAi" id="55129"/>
<dbReference type="Pharos" id="Q9NW15">
    <property type="development level" value="Tbio"/>
</dbReference>
<dbReference type="PRO" id="PR:Q9NW15"/>
<dbReference type="Proteomes" id="UP000005640">
    <property type="component" value="Chromosome 3"/>
</dbReference>
<dbReference type="RNAct" id="Q9NW15">
    <property type="molecule type" value="protein"/>
</dbReference>
<dbReference type="Bgee" id="ENSG00000160746">
    <property type="expression patterns" value="Expressed in stromal cell of endometrium and 186 other cell types or tissues"/>
</dbReference>
<dbReference type="ExpressionAtlas" id="Q9NW15">
    <property type="expression patterns" value="baseline and differential"/>
</dbReference>
<dbReference type="GO" id="GO:0005929">
    <property type="term" value="C:cilium"/>
    <property type="evidence" value="ECO:0000314"/>
    <property type="project" value="HPA"/>
</dbReference>
<dbReference type="GO" id="GO:0043231">
    <property type="term" value="C:intracellular membrane-bounded organelle"/>
    <property type="evidence" value="ECO:0000314"/>
    <property type="project" value="HPA"/>
</dbReference>
<dbReference type="GO" id="GO:0016020">
    <property type="term" value="C:membrane"/>
    <property type="evidence" value="ECO:0007005"/>
    <property type="project" value="UniProtKB"/>
</dbReference>
<dbReference type="GO" id="GO:0005886">
    <property type="term" value="C:plasma membrane"/>
    <property type="evidence" value="ECO:0000314"/>
    <property type="project" value="HPA"/>
</dbReference>
<dbReference type="GO" id="GO:0005227">
    <property type="term" value="F:calcium-activated cation channel activity"/>
    <property type="evidence" value="ECO:0000314"/>
    <property type="project" value="UniProtKB"/>
</dbReference>
<dbReference type="GO" id="GO:0005254">
    <property type="term" value="F:chloride channel activity"/>
    <property type="evidence" value="ECO:0000318"/>
    <property type="project" value="GO_Central"/>
</dbReference>
<dbReference type="GO" id="GO:0005229">
    <property type="term" value="F:intracellularly calcium-gated chloride channel activity"/>
    <property type="evidence" value="ECO:0000314"/>
    <property type="project" value="UniProtKB"/>
</dbReference>
<dbReference type="GO" id="GO:1902476">
    <property type="term" value="P:chloride transmembrane transport"/>
    <property type="evidence" value="ECO:0000314"/>
    <property type="project" value="UniProtKB"/>
</dbReference>
<dbReference type="GO" id="GO:0034220">
    <property type="term" value="P:monoatomic ion transmembrane transport"/>
    <property type="evidence" value="ECO:0000304"/>
    <property type="project" value="Reactome"/>
</dbReference>
<dbReference type="InterPro" id="IPR007632">
    <property type="entry name" value="Anoctamin"/>
</dbReference>
<dbReference type="InterPro" id="IPR049452">
    <property type="entry name" value="Anoctamin_TM"/>
</dbReference>
<dbReference type="PANTHER" id="PTHR12308">
    <property type="entry name" value="ANOCTAMIN"/>
    <property type="match status" value="1"/>
</dbReference>
<dbReference type="PANTHER" id="PTHR12308:SF40">
    <property type="entry name" value="ANOCTAMIN-10"/>
    <property type="match status" value="1"/>
</dbReference>
<dbReference type="Pfam" id="PF04547">
    <property type="entry name" value="Anoctamin"/>
    <property type="match status" value="1"/>
</dbReference>
<accession>Q9NW15</accession>
<accession>A8K8K3</accession>
<accession>A8MV74</accession>
<accession>B3KTZ1</accession>
<accession>B3KY93</accession>
<accession>B4DJ83</accession>
<accession>B4DNK2</accession>
<accession>B7WP12</accession>
<accession>C9JHS1</accession>
<accession>Q8IXX9</accession>
<gene>
    <name type="primary">ANO10</name>
    <name type="synonym">TMEM16K</name>
</gene>
<comment type="function">
    <text evidence="4 7">Does not exhibit calcium-activated chloride channel (CaCC) activity. Can inhibit the activity of ANO1.</text>
</comment>
<comment type="subcellular location">
    <subcellularLocation>
        <location evidence="4 6 7">Cell membrane</location>
        <topology evidence="4 6 7">Multi-pass membrane protein</topology>
    </subcellularLocation>
    <text>Shows predominantly an intracellular localization with a weak expression in the cell membrane.</text>
</comment>
<comment type="alternative products">
    <event type="alternative splicing"/>
    <isoform>
        <id>Q9NW15-1</id>
        <name>1</name>
        <sequence type="displayed"/>
    </isoform>
    <isoform>
        <id>Q9NW15-2</id>
        <name>2</name>
        <sequence type="described" ref="VSP_026033"/>
    </isoform>
    <isoform>
        <id>Q9NW15-3</id>
        <name>3</name>
        <sequence type="described" ref="VSP_038212"/>
    </isoform>
    <isoform>
        <id>Q9NW15-4</id>
        <name>4</name>
        <sequence type="described" ref="VSP_038211"/>
    </isoform>
    <isoform>
        <id>Q9NW15-5</id>
        <name>5</name>
        <sequence type="described" ref="VSP_045885"/>
    </isoform>
</comment>
<comment type="tissue specificity">
    <text evidence="5">Highly expressed in the brain. Intermediate levels in the retina and heart and low levels in the placenta, liver, lung, duodenum, kidney, testis and spleen. In brain areas, highest expression in the frontal and occipital cortices and in the cerebellum. Lower expression in the fetal brain than in the adult brain.</text>
</comment>
<comment type="disease" evidence="5">
    <disease id="DI-02959">
        <name>Spinocerebellar ataxia, autosomal recessive, 10</name>
        <acronym>SCAR10</acronym>
        <description>A form of spinocerebellar ataxia, a clinically and genetically heterogeneous group of cerebellar disorders. Patients show progressive incoordination of gait and often poor coordination of hands, speech and eye movements, due to degeneration of the cerebellum with variable involvement of the brainstem and spinal cord. SCAR10 is characterized by onset in the teenage or young adult years of gait and limb ataxia, dysarthria, and nystagmus associated with marked cerebellar atrophy on brain imaging.</description>
        <dbReference type="MIM" id="613728"/>
    </disease>
    <text>The disease is caused by variants affecting the gene represented in this entry.</text>
</comment>
<comment type="miscellaneous">
    <text>The term 'anoctamin' was coined because these channels are anion selective and have eight (OCT) transmembrane segments. There is some dissatisfaction in the field with the Ano nomenclature because it is not certain that all the members of this family are anion channels or have the 8-transmembrane topology.</text>
</comment>
<comment type="similarity">
    <text evidence="10">Belongs to the anoctamin family.</text>
</comment>
<comment type="sequence caution" evidence="10">
    <conflict type="miscellaneous discrepancy">
        <sequence resource="EMBL-CDS" id="BAA91573"/>
    </conflict>
    <text>Contaminating sequence.</text>
</comment>
<comment type="sequence caution" evidence="10">
    <conflict type="frameshift">
        <sequence resource="EMBL" id="BC038855"/>
    </conflict>
</comment>
<reference key="1">
    <citation type="journal article" date="2004" name="Nat. Genet.">
        <title>Complete sequencing and characterization of 21,243 full-length human cDNAs.</title>
        <authorList>
            <person name="Ota T."/>
            <person name="Suzuki Y."/>
            <person name="Nishikawa T."/>
            <person name="Otsuki T."/>
            <person name="Sugiyama T."/>
            <person name="Irie R."/>
            <person name="Wakamatsu A."/>
            <person name="Hayashi K."/>
            <person name="Sato H."/>
            <person name="Nagai K."/>
            <person name="Kimura K."/>
            <person name="Makita H."/>
            <person name="Sekine M."/>
            <person name="Obayashi M."/>
            <person name="Nishi T."/>
            <person name="Shibahara T."/>
            <person name="Tanaka T."/>
            <person name="Ishii S."/>
            <person name="Yamamoto J."/>
            <person name="Saito K."/>
            <person name="Kawai Y."/>
            <person name="Isono Y."/>
            <person name="Nakamura Y."/>
            <person name="Nagahari K."/>
            <person name="Murakami K."/>
            <person name="Yasuda T."/>
            <person name="Iwayanagi T."/>
            <person name="Wagatsuma M."/>
            <person name="Shiratori A."/>
            <person name="Sudo H."/>
            <person name="Hosoiri T."/>
            <person name="Kaku Y."/>
            <person name="Kodaira H."/>
            <person name="Kondo H."/>
            <person name="Sugawara M."/>
            <person name="Takahashi M."/>
            <person name="Kanda K."/>
            <person name="Yokoi T."/>
            <person name="Furuya T."/>
            <person name="Kikkawa E."/>
            <person name="Omura Y."/>
            <person name="Abe K."/>
            <person name="Kamihara K."/>
            <person name="Katsuta N."/>
            <person name="Sato K."/>
            <person name="Tanikawa M."/>
            <person name="Yamazaki M."/>
            <person name="Ninomiya K."/>
            <person name="Ishibashi T."/>
            <person name="Yamashita H."/>
            <person name="Murakawa K."/>
            <person name="Fujimori K."/>
            <person name="Tanai H."/>
            <person name="Kimata M."/>
            <person name="Watanabe M."/>
            <person name="Hiraoka S."/>
            <person name="Chiba Y."/>
            <person name="Ishida S."/>
            <person name="Ono Y."/>
            <person name="Takiguchi S."/>
            <person name="Watanabe S."/>
            <person name="Yosida M."/>
            <person name="Hotuta T."/>
            <person name="Kusano J."/>
            <person name="Kanehori K."/>
            <person name="Takahashi-Fujii A."/>
            <person name="Hara H."/>
            <person name="Tanase T.-O."/>
            <person name="Nomura Y."/>
            <person name="Togiya S."/>
            <person name="Komai F."/>
            <person name="Hara R."/>
            <person name="Takeuchi K."/>
            <person name="Arita M."/>
            <person name="Imose N."/>
            <person name="Musashino K."/>
            <person name="Yuuki H."/>
            <person name="Oshima A."/>
            <person name="Sasaki N."/>
            <person name="Aotsuka S."/>
            <person name="Yoshikawa Y."/>
            <person name="Matsunawa H."/>
            <person name="Ichihara T."/>
            <person name="Shiohata N."/>
            <person name="Sano S."/>
            <person name="Moriya S."/>
            <person name="Momiyama H."/>
            <person name="Satoh N."/>
            <person name="Takami S."/>
            <person name="Terashima Y."/>
            <person name="Suzuki O."/>
            <person name="Nakagawa S."/>
            <person name="Senoh A."/>
            <person name="Mizoguchi H."/>
            <person name="Goto Y."/>
            <person name="Shimizu F."/>
            <person name="Wakebe H."/>
            <person name="Hishigaki H."/>
            <person name="Watanabe T."/>
            <person name="Sugiyama A."/>
            <person name="Takemoto M."/>
            <person name="Kawakami B."/>
            <person name="Yamazaki M."/>
            <person name="Watanabe K."/>
            <person name="Kumagai A."/>
            <person name="Itakura S."/>
            <person name="Fukuzumi Y."/>
            <person name="Fujimori Y."/>
            <person name="Komiyama M."/>
            <person name="Tashiro H."/>
            <person name="Tanigami A."/>
            <person name="Fujiwara T."/>
            <person name="Ono T."/>
            <person name="Yamada K."/>
            <person name="Fujii Y."/>
            <person name="Ozaki K."/>
            <person name="Hirao M."/>
            <person name="Ohmori Y."/>
            <person name="Kawabata A."/>
            <person name="Hikiji T."/>
            <person name="Kobatake N."/>
            <person name="Inagaki H."/>
            <person name="Ikema Y."/>
            <person name="Okamoto S."/>
            <person name="Okitani R."/>
            <person name="Kawakami T."/>
            <person name="Noguchi S."/>
            <person name="Itoh T."/>
            <person name="Shigeta K."/>
            <person name="Senba T."/>
            <person name="Matsumura K."/>
            <person name="Nakajima Y."/>
            <person name="Mizuno T."/>
            <person name="Morinaga M."/>
            <person name="Sasaki M."/>
            <person name="Togashi T."/>
            <person name="Oyama M."/>
            <person name="Hata H."/>
            <person name="Watanabe M."/>
            <person name="Komatsu T."/>
            <person name="Mizushima-Sugano J."/>
            <person name="Satoh T."/>
            <person name="Shirai Y."/>
            <person name="Takahashi Y."/>
            <person name="Nakagawa K."/>
            <person name="Okumura K."/>
            <person name="Nagase T."/>
            <person name="Nomura N."/>
            <person name="Kikuchi H."/>
            <person name="Masuho Y."/>
            <person name="Yamashita R."/>
            <person name="Nakai K."/>
            <person name="Yada T."/>
            <person name="Nakamura Y."/>
            <person name="Ohara O."/>
            <person name="Isogai T."/>
            <person name="Sugano S."/>
        </authorList>
    </citation>
    <scope>NUCLEOTIDE SEQUENCE [LARGE SCALE MRNA] (ISOFORMS 1; 3; 4 AND 5)</scope>
    <scope>VARIANT GLN-462</scope>
    <source>
        <tissue>Substantia nigra</tissue>
        <tissue>Teratocarcinoma</tissue>
        <tissue>Testis</tissue>
        <tissue>Urinary bladder</tissue>
    </source>
</reference>
<reference key="2">
    <citation type="journal article" date="2006" name="Nature">
        <title>The DNA sequence, annotation and analysis of human chromosome 3.</title>
        <authorList>
            <person name="Muzny D.M."/>
            <person name="Scherer S.E."/>
            <person name="Kaul R."/>
            <person name="Wang J."/>
            <person name="Yu J."/>
            <person name="Sudbrak R."/>
            <person name="Buhay C.J."/>
            <person name="Chen R."/>
            <person name="Cree A."/>
            <person name="Ding Y."/>
            <person name="Dugan-Rocha S."/>
            <person name="Gill R."/>
            <person name="Gunaratne P."/>
            <person name="Harris R.A."/>
            <person name="Hawes A.C."/>
            <person name="Hernandez J."/>
            <person name="Hodgson A.V."/>
            <person name="Hume J."/>
            <person name="Jackson A."/>
            <person name="Khan Z.M."/>
            <person name="Kovar-Smith C."/>
            <person name="Lewis L.R."/>
            <person name="Lozado R.J."/>
            <person name="Metzker M.L."/>
            <person name="Milosavljevic A."/>
            <person name="Miner G.R."/>
            <person name="Morgan M.B."/>
            <person name="Nazareth L.V."/>
            <person name="Scott G."/>
            <person name="Sodergren E."/>
            <person name="Song X.-Z."/>
            <person name="Steffen D."/>
            <person name="Wei S."/>
            <person name="Wheeler D.A."/>
            <person name="Wright M.W."/>
            <person name="Worley K.C."/>
            <person name="Yuan Y."/>
            <person name="Zhang Z."/>
            <person name="Adams C.Q."/>
            <person name="Ansari-Lari M.A."/>
            <person name="Ayele M."/>
            <person name="Brown M.J."/>
            <person name="Chen G."/>
            <person name="Chen Z."/>
            <person name="Clendenning J."/>
            <person name="Clerc-Blankenburg K.P."/>
            <person name="Chen R."/>
            <person name="Chen Z."/>
            <person name="Davis C."/>
            <person name="Delgado O."/>
            <person name="Dinh H.H."/>
            <person name="Dong W."/>
            <person name="Draper H."/>
            <person name="Ernst S."/>
            <person name="Fu G."/>
            <person name="Gonzalez-Garay M.L."/>
            <person name="Garcia D.K."/>
            <person name="Gillett W."/>
            <person name="Gu J."/>
            <person name="Hao B."/>
            <person name="Haugen E."/>
            <person name="Havlak P."/>
            <person name="He X."/>
            <person name="Hennig S."/>
            <person name="Hu S."/>
            <person name="Huang W."/>
            <person name="Jackson L.R."/>
            <person name="Jacob L.S."/>
            <person name="Kelly S.H."/>
            <person name="Kube M."/>
            <person name="Levy R."/>
            <person name="Li Z."/>
            <person name="Liu B."/>
            <person name="Liu J."/>
            <person name="Liu W."/>
            <person name="Lu J."/>
            <person name="Maheshwari M."/>
            <person name="Nguyen B.-V."/>
            <person name="Okwuonu G.O."/>
            <person name="Palmeiri A."/>
            <person name="Pasternak S."/>
            <person name="Perez L.M."/>
            <person name="Phelps K.A."/>
            <person name="Plopper F.J."/>
            <person name="Qiang B."/>
            <person name="Raymond C."/>
            <person name="Rodriguez R."/>
            <person name="Saenphimmachak C."/>
            <person name="Santibanez J."/>
            <person name="Shen H."/>
            <person name="Shen Y."/>
            <person name="Subramanian S."/>
            <person name="Tabor P.E."/>
            <person name="Verduzco D."/>
            <person name="Waldron L."/>
            <person name="Wang J."/>
            <person name="Wang J."/>
            <person name="Wang Q."/>
            <person name="Williams G.A."/>
            <person name="Wong G.K.-S."/>
            <person name="Yao Z."/>
            <person name="Zhang J."/>
            <person name="Zhang X."/>
            <person name="Zhao G."/>
            <person name="Zhou J."/>
            <person name="Zhou Y."/>
            <person name="Nelson D."/>
            <person name="Lehrach H."/>
            <person name="Reinhardt R."/>
            <person name="Naylor S.L."/>
            <person name="Yang H."/>
            <person name="Olson M."/>
            <person name="Weinstock G."/>
            <person name="Gibbs R.A."/>
        </authorList>
    </citation>
    <scope>NUCLEOTIDE SEQUENCE [LARGE SCALE GENOMIC DNA]</scope>
</reference>
<reference key="3">
    <citation type="submission" date="2005-07" db="EMBL/GenBank/DDBJ databases">
        <authorList>
            <person name="Mural R.J."/>
            <person name="Istrail S."/>
            <person name="Sutton G.G."/>
            <person name="Florea L."/>
            <person name="Halpern A.L."/>
            <person name="Mobarry C.M."/>
            <person name="Lippert R."/>
            <person name="Walenz B."/>
            <person name="Shatkay H."/>
            <person name="Dew I."/>
            <person name="Miller J.R."/>
            <person name="Flanigan M.J."/>
            <person name="Edwards N.J."/>
            <person name="Bolanos R."/>
            <person name="Fasulo D."/>
            <person name="Halldorsson B.V."/>
            <person name="Hannenhalli S."/>
            <person name="Turner R."/>
            <person name="Yooseph S."/>
            <person name="Lu F."/>
            <person name="Nusskern D.R."/>
            <person name="Shue B.C."/>
            <person name="Zheng X.H."/>
            <person name="Zhong F."/>
            <person name="Delcher A.L."/>
            <person name="Huson D.H."/>
            <person name="Kravitz S.A."/>
            <person name="Mouchard L."/>
            <person name="Reinert K."/>
            <person name="Remington K.A."/>
            <person name="Clark A.G."/>
            <person name="Waterman M.S."/>
            <person name="Eichler E.E."/>
            <person name="Adams M.D."/>
            <person name="Hunkapiller M.W."/>
            <person name="Myers E.W."/>
            <person name="Venter J.C."/>
        </authorList>
    </citation>
    <scope>NUCLEOTIDE SEQUENCE [LARGE SCALE GENOMIC DNA]</scope>
</reference>
<reference key="4">
    <citation type="journal article" date="2004" name="Genome Res.">
        <title>The status, quality, and expansion of the NIH full-length cDNA project: the Mammalian Gene Collection (MGC).</title>
        <authorList>
            <consortium name="The MGC Project Team"/>
        </authorList>
    </citation>
    <scope>NUCLEOTIDE SEQUENCE [LARGE SCALE MRNA] (ISOFORM 2)</scope>
    <scope>VARIANTS MET-561 AND ALA-583</scope>
    <source>
        <tissue>Leukocyte</tissue>
    </source>
</reference>
<reference key="5">
    <citation type="journal article" date="2010" name="J. Biol. Chem.">
        <title>Expression and function of epithelial anoctamins.</title>
        <authorList>
            <person name="Schreiber R."/>
            <person name="Uliyakina I."/>
            <person name="Kongsuphol P."/>
            <person name="Warth R."/>
            <person name="Mirza M."/>
            <person name="Martins J.R."/>
            <person name="Kunzelmann K."/>
        </authorList>
    </citation>
    <scope>FUNCTION</scope>
    <scope>SUBCELLULAR LOCATION</scope>
</reference>
<reference key="6">
    <citation type="journal article" date="2011" name="Acta Pharmacol. Sin.">
        <title>Physiological roles and diseases of Tmem16/Anoctamin proteins: are they all chloride channels?</title>
        <authorList>
            <person name="Duran C."/>
            <person name="Hartzell H.C."/>
        </authorList>
    </citation>
    <scope>REVIEW</scope>
</reference>
<reference key="7">
    <citation type="journal article" date="2011" name="Pflugers Arch.">
        <title>Anoctamins.</title>
        <authorList>
            <person name="Kunzelmann K."/>
            <person name="Tian Y."/>
            <person name="Martins J.R."/>
            <person name="Faria D."/>
            <person name="Kongsuphol P."/>
            <person name="Ousingsawat J."/>
            <person name="Thevenod F."/>
            <person name="Roussa E."/>
            <person name="Rock J."/>
            <person name="Schreiber R."/>
        </authorList>
    </citation>
    <scope>REVIEW</scope>
</reference>
<reference key="8">
    <citation type="journal article" date="2012" name="Am. J. Physiol.">
        <title>ANOs 3-7 in the anoctamin/Tmem16 Cl- channel family are intracellular proteins.</title>
        <authorList>
            <person name="Duran C."/>
            <person name="Qu Z."/>
            <person name="Osunkoya A.O."/>
            <person name="Cui Y."/>
            <person name="Hartzell H.C."/>
        </authorList>
    </citation>
    <scope>SUBCELLULAR LOCATION</scope>
</reference>
<reference key="9">
    <citation type="journal article" date="2012" name="Exp. Physiol.">
        <title>The anoctamin (TMEM16) gene family: calcium-activated chloride channels come of age.</title>
        <authorList>
            <person name="Winpenny J.P."/>
            <person name="Gray M.A."/>
        </authorList>
    </citation>
    <scope>REVIEW</scope>
</reference>
<reference key="10">
    <citation type="journal article" date="2012" name="Exp. Physiol.">
        <title>The anoctamin family: TMEM16A and TMEM16B as calcium-activated chloride channels.</title>
        <authorList>
            <person name="Scudieri P."/>
            <person name="Sondo E."/>
            <person name="Ferrera L."/>
            <person name="Galietta L.J."/>
        </authorList>
    </citation>
    <scope>REVIEW</scope>
    <scope>ABSENCE OF CALCIUM-ACTIVATED CHLORIDE CHANNEL ACTIVITY</scope>
</reference>
<reference key="11">
    <citation type="journal article" date="2012" name="J. Cell Sci.">
        <title>Anoctamins are a family of Ca2+ activated Cl- channels.</title>
        <authorList>
            <person name="Tian Y."/>
            <person name="Schreiber R."/>
            <person name="Kunzelmann K."/>
        </authorList>
    </citation>
    <scope>FUNCTION</scope>
    <scope>SUBCELLULAR LOCATION</scope>
</reference>
<reference key="12">
    <citation type="journal article" date="2010" name="Am. J. Hum. Genet.">
        <title>Targeted next-generation sequencing of a 12.5 Mb homozygous region reveals ANO10 mutations in patients with autosomal-recessive cerebellar ataxia.</title>
        <authorList>
            <person name="Vermeer S."/>
            <person name="Hoischen A."/>
            <person name="Meijer R.P."/>
            <person name="Gilissen C."/>
            <person name="Neveling K."/>
            <person name="Wieskamp N."/>
            <person name="de Brouwer A."/>
            <person name="Koenig M."/>
            <person name="Anheim M."/>
            <person name="Assoum M."/>
            <person name="Drouot N."/>
            <person name="Todorovic S."/>
            <person name="Milic-Rasic V."/>
            <person name="Lochmuller H."/>
            <person name="Stevanin G."/>
            <person name="Goizet C."/>
            <person name="David A."/>
            <person name="Durr A."/>
            <person name="Brice A."/>
            <person name="Kremer B."/>
            <person name="van de Warrenburg B.P."/>
            <person name="Schijvenaars M.M."/>
            <person name="Heister A."/>
            <person name="Kwint M."/>
            <person name="Arts P."/>
            <person name="van der Wijst J."/>
            <person name="Veltman J."/>
            <person name="Kamsteeg E.J."/>
            <person name="Scheffer H."/>
            <person name="Knoers N."/>
        </authorList>
    </citation>
    <scope>VARIANT SCAR10 ARG-510</scope>
    <scope>TISSUE SPECIFICITY</scope>
</reference>